<sequence length="9" mass="1060">RPPGFSPFR</sequence>
<accession>P84895</accession>
<name>BRK1_PITHY</name>
<evidence type="ECO:0000250" key="1"/>
<evidence type="ECO:0000269" key="2">
    <source>
    </source>
</evidence>
<evidence type="ECO:0000305" key="3"/>
<keyword id="KW-0878">Amphibian defense peptide</keyword>
<keyword id="KW-0903">Direct protein sequencing</keyword>
<keyword id="KW-1213">G-protein coupled receptor impairing toxin</keyword>
<keyword id="KW-0379">Hydroxylation</keyword>
<keyword id="KW-0964">Secreted</keyword>
<keyword id="KW-0800">Toxin</keyword>
<keyword id="KW-0838">Vasoactive</keyword>
<keyword id="KW-0840">Vasodilator</keyword>
<feature type="peptide" id="PRO_0000248462" description="Bradykinin" evidence="2">
    <location>
        <begin position="1"/>
        <end position="9"/>
    </location>
</feature>
<feature type="modified residue" description="4-hydroxyproline; partial" evidence="2">
    <location>
        <position position="3"/>
    </location>
</feature>
<organism>
    <name type="scientific">Pithecopus hypochondrialis</name>
    <name type="common">Orange-legged leaf frog</name>
    <name type="synonym">Phyllomedusa hypochondrialis</name>
    <dbReference type="NCBI Taxonomy" id="317381"/>
    <lineage>
        <taxon>Eukaryota</taxon>
        <taxon>Metazoa</taxon>
        <taxon>Chordata</taxon>
        <taxon>Craniata</taxon>
        <taxon>Vertebrata</taxon>
        <taxon>Euteleostomi</taxon>
        <taxon>Amphibia</taxon>
        <taxon>Batrachia</taxon>
        <taxon>Anura</taxon>
        <taxon>Neobatrachia</taxon>
        <taxon>Hyloidea</taxon>
        <taxon>Hylidae</taxon>
        <taxon>Phyllomedusinae</taxon>
        <taxon>Pithecopus</taxon>
    </lineage>
</organism>
<dbReference type="GO" id="GO:0005576">
    <property type="term" value="C:extracellular region"/>
    <property type="evidence" value="ECO:0007669"/>
    <property type="project" value="UniProtKB-SubCell"/>
</dbReference>
<dbReference type="GO" id="GO:0090729">
    <property type="term" value="F:toxin activity"/>
    <property type="evidence" value="ECO:0007669"/>
    <property type="project" value="UniProtKB-KW"/>
</dbReference>
<dbReference type="GO" id="GO:0006952">
    <property type="term" value="P:defense response"/>
    <property type="evidence" value="ECO:0007669"/>
    <property type="project" value="UniProtKB-KW"/>
</dbReference>
<dbReference type="GO" id="GO:0042311">
    <property type="term" value="P:vasodilation"/>
    <property type="evidence" value="ECO:0007669"/>
    <property type="project" value="UniProtKB-KW"/>
</dbReference>
<proteinExistence type="evidence at protein level"/>
<comment type="function">
    <text evidence="1">Produces in vitro relaxation of rat arterial smooth muscle and constriction of intestinal smooth muscle (By similarity). May target bradykinin receptors (BDKRB).</text>
</comment>
<comment type="subcellular location">
    <subcellularLocation>
        <location>Secreted</location>
    </subcellularLocation>
</comment>
<comment type="tissue specificity">
    <text evidence="2">Expressed by the skin glands.</text>
</comment>
<comment type="mass spectrometry" mass="1060.51" error="0.1" method="MALDI" evidence="2"/>
<comment type="mass spectrometry" mass="1076.63" error="0.1" method="MALDI" evidence="2">
    <text>Hydroxylated.</text>
</comment>
<comment type="similarity">
    <text evidence="3">Belongs to the bradykinin-related peptide family.</text>
</comment>
<protein>
    <recommendedName>
        <fullName>Bradykinin</fullName>
    </recommendedName>
</protein>
<reference evidence="3" key="1">
    <citation type="journal article" date="2006" name="Peptides">
        <title>Bradykinin-related peptides from Phyllomedusa hypochondrialis.</title>
        <authorList>
            <person name="Brand G.D."/>
            <person name="Krause F.C."/>
            <person name="Silva L.P."/>
            <person name="Leite J.R.S.A."/>
            <person name="Melo J.A.T."/>
            <person name="Prates M.V."/>
            <person name="Pesquero J.B."/>
            <person name="Santos E.L."/>
            <person name="Nakaie C.R."/>
            <person name="Costa-Neto C.M."/>
            <person name="Bloch C. Jr."/>
        </authorList>
    </citation>
    <scope>PROTEIN SEQUENCE</scope>
    <scope>MASS SPECTROMETRY</scope>
    <scope>HYDROXYLATION AT PRO-3</scope>
    <source>
        <tissue evidence="2">Skin secretion</tissue>
    </source>
</reference>